<feature type="chain" id="PRO_0000355926" description="Maturase K">
    <location>
        <begin position="1"/>
        <end position="504"/>
    </location>
</feature>
<feature type="sequence variant" description="In cv. Borszczagowski.">
    <original>V</original>
    <variation>A</variation>
    <location>
        <position position="102"/>
    </location>
</feature>
<feature type="sequence variant" description="In cv. Borszczagowski.">
    <original>E</original>
    <variation>G</variation>
    <location>
        <position position="217"/>
    </location>
</feature>
<feature type="sequence variant" description="In cv. Borszczagowski.">
    <original>GHPISKPTWIDSSDFDIIDRFLRISRNLSHYYRGSSKKKNLYRIQYILRLSCVKTLARKHKSTV</original>
    <variation>DIPLVSRPGSIRRILILLIDFCVYPEIFLIITEDPQKKRICIEYNIYFAFLVLKLWLVNTKVLY</variation>
    <location>
        <begin position="384"/>
        <end position="447"/>
    </location>
</feature>
<sequence>MEEFQGYLELEKSRQRDFLYPLIFREYIYAFSHDHFLNGSILLENSGYDKKSSLLMVKHLITRMYHQNHFFFFTNYYNKNPFWGYNNNLYSQMLSEGFAVIVEIPLSLRLVSSLEEEEIAKSYNLRSSHSIFPFLEDKFPHLNYVSDVLIPYPLHLEILVQILRSWVKDASSFHLLRFFFHEYCNLNSLSTSKKLISFFSKRNRRLVLLLYNSYVCEYESIFLFLRNQSSHIRLTSYKGLFERIYFYGKIEHLVKVFANYFSAILRVFKDPLIHYVRYQAKSILVSKDTPLLINKWKYYLVNLWQCHFYVWSQPERIYINQLSKRSLDFLGYISSVRLNPSVVWTQMLENSFLIDNATQKLDTLVPIITLLASLAKAKFCNVLGHPISKPTWIDSSDFDIIDRFLRISRNLSHYYRGSSKKKNLYRIQYILRLSCVKTLARKHKSTVRALFKRLNSELLEEFFTEQEQVLSLIFPRTSFTLRRVYRGKIWYLDIICMNDLANHE</sequence>
<gene>
    <name evidence="1" type="primary">matK</name>
</gene>
<name>MATK_CUCSA</name>
<protein>
    <recommendedName>
        <fullName evidence="1">Maturase K</fullName>
    </recommendedName>
    <alternativeName>
        <fullName evidence="1">Intron maturase</fullName>
    </alternativeName>
</protein>
<reference key="1">
    <citation type="journal article" date="2006" name="Plant Cell Rep.">
        <title>Complete sequence and organization of the cucumber (Cucumis sativus L. cv. Baekmibaekdadagi) chloroplast genome.</title>
        <authorList>
            <person name="Kim J.-S."/>
            <person name="Jung J.D."/>
            <person name="Lee J.-A."/>
            <person name="Park H.-W."/>
            <person name="Oh K.-H."/>
            <person name="Jeong W.J."/>
            <person name="Choi D.-W."/>
            <person name="Liu J.R."/>
            <person name="Cho K.Y."/>
        </authorList>
    </citation>
    <scope>NUCLEOTIDE SEQUENCE [LARGE SCALE GENOMIC DNA]</scope>
    <source>
        <strain>cv. Baekmibaekdadagi</strain>
    </source>
</reference>
<reference key="2">
    <citation type="journal article" date="2007" name="Cell. Mol. Biol. Lett.">
        <title>The complete structure of the cucumber (Cucumis sativus L.) chloroplast genome: its composition and comparative analysis.</title>
        <authorList>
            <person name="Plader W.W."/>
            <person name="Yukawa Y."/>
            <person name="Sugiura M."/>
            <person name="Malepszy S."/>
        </authorList>
    </citation>
    <scope>NUCLEOTIDE SEQUENCE [LARGE SCALE GENOMIC DNA]</scope>
    <source>
        <strain>cv. Borszczagowski</strain>
    </source>
</reference>
<reference key="3">
    <citation type="journal article" date="2007" name="Genome">
        <title>Sequencing cucumber (Cucumis sativus L.) chloroplast genomes identifies differences between chilling-tolerant and -susceptible cucumber lines.</title>
        <authorList>
            <person name="Chung S.-M."/>
            <person name="Gordon V.S."/>
            <person name="Staub J.E."/>
        </authorList>
    </citation>
    <scope>NUCLEOTIDE SEQUENCE [LARGE SCALE GENOMIC DNA]</scope>
    <source>
        <strain>cv. Chipper</strain>
        <strain>cv. Gy14</strain>
    </source>
</reference>
<organism>
    <name type="scientific">Cucumis sativus</name>
    <name type="common">Cucumber</name>
    <dbReference type="NCBI Taxonomy" id="3659"/>
    <lineage>
        <taxon>Eukaryota</taxon>
        <taxon>Viridiplantae</taxon>
        <taxon>Streptophyta</taxon>
        <taxon>Embryophyta</taxon>
        <taxon>Tracheophyta</taxon>
        <taxon>Spermatophyta</taxon>
        <taxon>Magnoliopsida</taxon>
        <taxon>eudicotyledons</taxon>
        <taxon>Gunneridae</taxon>
        <taxon>Pentapetalae</taxon>
        <taxon>rosids</taxon>
        <taxon>fabids</taxon>
        <taxon>Cucurbitales</taxon>
        <taxon>Cucurbitaceae</taxon>
        <taxon>Benincaseae</taxon>
        <taxon>Cucumis</taxon>
    </lineage>
</organism>
<keyword id="KW-0150">Chloroplast</keyword>
<keyword id="KW-0507">mRNA processing</keyword>
<keyword id="KW-0934">Plastid</keyword>
<keyword id="KW-0694">RNA-binding</keyword>
<keyword id="KW-0819">tRNA processing</keyword>
<proteinExistence type="inferred from homology"/>
<accession>Q2QDA7</accession>
<accession>Q4VZQ2</accession>
<comment type="function">
    <text evidence="1">Usually encoded in the trnK tRNA gene intron. Probably assists in splicing its own and other chloroplast group II introns.</text>
</comment>
<comment type="subcellular location">
    <subcellularLocation>
        <location>Plastid</location>
        <location>Chloroplast</location>
    </subcellularLocation>
</comment>
<comment type="similarity">
    <text evidence="1">Belongs to the intron maturase 2 family. MatK subfamily.</text>
</comment>
<dbReference type="EMBL" id="DQ119058">
    <property type="protein sequence ID" value="AAZ94633.1"/>
    <property type="molecule type" value="Genomic_DNA"/>
</dbReference>
<dbReference type="EMBL" id="AJ970307">
    <property type="protein sequence ID" value="CAJ00739.1"/>
    <property type="molecule type" value="Genomic_DNA"/>
</dbReference>
<dbReference type="EMBL" id="DQ865975">
    <property type="protein sequence ID" value="ABI97399.1"/>
    <property type="molecule type" value="Genomic_DNA"/>
</dbReference>
<dbReference type="EMBL" id="DQ865976">
    <property type="protein sequence ID" value="ABI98727.1"/>
    <property type="molecule type" value="Genomic_DNA"/>
</dbReference>
<dbReference type="RefSeq" id="YP_247580.1">
    <property type="nucleotide sequence ID" value="NC_007144.1"/>
</dbReference>
<dbReference type="GeneID" id="3429381"/>
<dbReference type="KEGG" id="csv:3429381"/>
<dbReference type="OrthoDB" id="1886907at2759"/>
<dbReference type="GO" id="GO:0009507">
    <property type="term" value="C:chloroplast"/>
    <property type="evidence" value="ECO:0007669"/>
    <property type="project" value="UniProtKB-SubCell"/>
</dbReference>
<dbReference type="GO" id="GO:0003723">
    <property type="term" value="F:RNA binding"/>
    <property type="evidence" value="ECO:0007669"/>
    <property type="project" value="UniProtKB-KW"/>
</dbReference>
<dbReference type="GO" id="GO:0006397">
    <property type="term" value="P:mRNA processing"/>
    <property type="evidence" value="ECO:0007669"/>
    <property type="project" value="UniProtKB-KW"/>
</dbReference>
<dbReference type="GO" id="GO:0008380">
    <property type="term" value="P:RNA splicing"/>
    <property type="evidence" value="ECO:0007669"/>
    <property type="project" value="UniProtKB-UniRule"/>
</dbReference>
<dbReference type="GO" id="GO:0008033">
    <property type="term" value="P:tRNA processing"/>
    <property type="evidence" value="ECO:0007669"/>
    <property type="project" value="UniProtKB-KW"/>
</dbReference>
<dbReference type="HAMAP" id="MF_01390">
    <property type="entry name" value="MatK"/>
    <property type="match status" value="1"/>
</dbReference>
<dbReference type="InterPro" id="IPR024937">
    <property type="entry name" value="Domain_X"/>
</dbReference>
<dbReference type="InterPro" id="IPR002866">
    <property type="entry name" value="Maturase_MatK"/>
</dbReference>
<dbReference type="InterPro" id="IPR024942">
    <property type="entry name" value="Maturase_MatK_N"/>
</dbReference>
<dbReference type="PANTHER" id="PTHR34811">
    <property type="entry name" value="MATURASE K"/>
    <property type="match status" value="1"/>
</dbReference>
<dbReference type="PANTHER" id="PTHR34811:SF1">
    <property type="entry name" value="MATURASE K"/>
    <property type="match status" value="1"/>
</dbReference>
<dbReference type="Pfam" id="PF01348">
    <property type="entry name" value="Intron_maturas2"/>
    <property type="match status" value="1"/>
</dbReference>
<dbReference type="Pfam" id="PF01824">
    <property type="entry name" value="MatK_N"/>
    <property type="match status" value="1"/>
</dbReference>
<geneLocation type="chloroplast"/>
<evidence type="ECO:0000255" key="1">
    <source>
        <dbReference type="HAMAP-Rule" id="MF_01390"/>
    </source>
</evidence>